<sequence length="315" mass="35407">MTGQGQSASGSSAWSTVFRHVRYENLIAGVSGGVLSNLALHPLDLVKIRFAVSDGLELRPKYNGILHCLTTIWKLDGLRGLYQGVTPNIWGAGLSWGLYFFFYNAIKSYKTEGRAERLEATEYLVSAAEAGAMTLCITNPLWVTKTRLMLQYDAVVNSPHRQYKGMFDTLVKIYKYEGVRGLYKGFVPGLFGTSHGALQFMAYELLKLKYNQHINRLPEAQLSTVEYISVAALSKIFAVAATYPYQVVRARLQDQHMFYSGVIDVITKTWRKEGVGGFYKGIAPNLIRVTPACCITFVVYENVSHFLLDLREKRK</sequence>
<protein>
    <recommendedName>
        <fullName>Solute carrier family 25 member 32</fullName>
    </recommendedName>
    <alternativeName>
        <fullName evidence="12">Mitochondrial FAD transporter</fullName>
    </alternativeName>
</protein>
<organism>
    <name type="scientific">Homo sapiens</name>
    <name type="common">Human</name>
    <dbReference type="NCBI Taxonomy" id="9606"/>
    <lineage>
        <taxon>Eukaryota</taxon>
        <taxon>Metazoa</taxon>
        <taxon>Chordata</taxon>
        <taxon>Craniata</taxon>
        <taxon>Vertebrata</taxon>
        <taxon>Euteleostomi</taxon>
        <taxon>Mammalia</taxon>
        <taxon>Eutheria</taxon>
        <taxon>Euarchontoglires</taxon>
        <taxon>Primates</taxon>
        <taxon>Haplorrhini</taxon>
        <taxon>Catarrhini</taxon>
        <taxon>Hominidae</taxon>
        <taxon>Homo</taxon>
    </lineage>
</organism>
<reference key="1">
    <citation type="journal article" date="2000" name="J. Biol. Chem.">
        <title>Retrovirally mediated complementation of the glyB phenotype. Cloning of a human gene encoding the carrier for entry of folates into mitochondria.</title>
        <authorList>
            <person name="Titus S.A."/>
            <person name="Moran R.G."/>
        </authorList>
    </citation>
    <scope>NUCLEOTIDE SEQUENCE [MRNA]</scope>
    <scope>VARIANT HIS-117</scope>
</reference>
<reference key="2">
    <citation type="journal article" date="2004" name="Nat. Genet.">
        <title>Complete sequencing and characterization of 21,243 full-length human cDNAs.</title>
        <authorList>
            <person name="Ota T."/>
            <person name="Suzuki Y."/>
            <person name="Nishikawa T."/>
            <person name="Otsuki T."/>
            <person name="Sugiyama T."/>
            <person name="Irie R."/>
            <person name="Wakamatsu A."/>
            <person name="Hayashi K."/>
            <person name="Sato H."/>
            <person name="Nagai K."/>
            <person name="Kimura K."/>
            <person name="Makita H."/>
            <person name="Sekine M."/>
            <person name="Obayashi M."/>
            <person name="Nishi T."/>
            <person name="Shibahara T."/>
            <person name="Tanaka T."/>
            <person name="Ishii S."/>
            <person name="Yamamoto J."/>
            <person name="Saito K."/>
            <person name="Kawai Y."/>
            <person name="Isono Y."/>
            <person name="Nakamura Y."/>
            <person name="Nagahari K."/>
            <person name="Murakami K."/>
            <person name="Yasuda T."/>
            <person name="Iwayanagi T."/>
            <person name="Wagatsuma M."/>
            <person name="Shiratori A."/>
            <person name="Sudo H."/>
            <person name="Hosoiri T."/>
            <person name="Kaku Y."/>
            <person name="Kodaira H."/>
            <person name="Kondo H."/>
            <person name="Sugawara M."/>
            <person name="Takahashi M."/>
            <person name="Kanda K."/>
            <person name="Yokoi T."/>
            <person name="Furuya T."/>
            <person name="Kikkawa E."/>
            <person name="Omura Y."/>
            <person name="Abe K."/>
            <person name="Kamihara K."/>
            <person name="Katsuta N."/>
            <person name="Sato K."/>
            <person name="Tanikawa M."/>
            <person name="Yamazaki M."/>
            <person name="Ninomiya K."/>
            <person name="Ishibashi T."/>
            <person name="Yamashita H."/>
            <person name="Murakawa K."/>
            <person name="Fujimori K."/>
            <person name="Tanai H."/>
            <person name="Kimata M."/>
            <person name="Watanabe M."/>
            <person name="Hiraoka S."/>
            <person name="Chiba Y."/>
            <person name="Ishida S."/>
            <person name="Ono Y."/>
            <person name="Takiguchi S."/>
            <person name="Watanabe S."/>
            <person name="Yosida M."/>
            <person name="Hotuta T."/>
            <person name="Kusano J."/>
            <person name="Kanehori K."/>
            <person name="Takahashi-Fujii A."/>
            <person name="Hara H."/>
            <person name="Tanase T.-O."/>
            <person name="Nomura Y."/>
            <person name="Togiya S."/>
            <person name="Komai F."/>
            <person name="Hara R."/>
            <person name="Takeuchi K."/>
            <person name="Arita M."/>
            <person name="Imose N."/>
            <person name="Musashino K."/>
            <person name="Yuuki H."/>
            <person name="Oshima A."/>
            <person name="Sasaki N."/>
            <person name="Aotsuka S."/>
            <person name="Yoshikawa Y."/>
            <person name="Matsunawa H."/>
            <person name="Ichihara T."/>
            <person name="Shiohata N."/>
            <person name="Sano S."/>
            <person name="Moriya S."/>
            <person name="Momiyama H."/>
            <person name="Satoh N."/>
            <person name="Takami S."/>
            <person name="Terashima Y."/>
            <person name="Suzuki O."/>
            <person name="Nakagawa S."/>
            <person name="Senoh A."/>
            <person name="Mizoguchi H."/>
            <person name="Goto Y."/>
            <person name="Shimizu F."/>
            <person name="Wakebe H."/>
            <person name="Hishigaki H."/>
            <person name="Watanabe T."/>
            <person name="Sugiyama A."/>
            <person name="Takemoto M."/>
            <person name="Kawakami B."/>
            <person name="Yamazaki M."/>
            <person name="Watanabe K."/>
            <person name="Kumagai A."/>
            <person name="Itakura S."/>
            <person name="Fukuzumi Y."/>
            <person name="Fujimori Y."/>
            <person name="Komiyama M."/>
            <person name="Tashiro H."/>
            <person name="Tanigami A."/>
            <person name="Fujiwara T."/>
            <person name="Ono T."/>
            <person name="Yamada K."/>
            <person name="Fujii Y."/>
            <person name="Ozaki K."/>
            <person name="Hirao M."/>
            <person name="Ohmori Y."/>
            <person name="Kawabata A."/>
            <person name="Hikiji T."/>
            <person name="Kobatake N."/>
            <person name="Inagaki H."/>
            <person name="Ikema Y."/>
            <person name="Okamoto S."/>
            <person name="Okitani R."/>
            <person name="Kawakami T."/>
            <person name="Noguchi S."/>
            <person name="Itoh T."/>
            <person name="Shigeta K."/>
            <person name="Senba T."/>
            <person name="Matsumura K."/>
            <person name="Nakajima Y."/>
            <person name="Mizuno T."/>
            <person name="Morinaga M."/>
            <person name="Sasaki M."/>
            <person name="Togashi T."/>
            <person name="Oyama M."/>
            <person name="Hata H."/>
            <person name="Watanabe M."/>
            <person name="Komatsu T."/>
            <person name="Mizushima-Sugano J."/>
            <person name="Satoh T."/>
            <person name="Shirai Y."/>
            <person name="Takahashi Y."/>
            <person name="Nakagawa K."/>
            <person name="Okumura K."/>
            <person name="Nagase T."/>
            <person name="Nomura N."/>
            <person name="Kikuchi H."/>
            <person name="Masuho Y."/>
            <person name="Yamashita R."/>
            <person name="Nakai K."/>
            <person name="Yada T."/>
            <person name="Nakamura Y."/>
            <person name="Ohara O."/>
            <person name="Isogai T."/>
            <person name="Sugano S."/>
        </authorList>
    </citation>
    <scope>NUCLEOTIDE SEQUENCE [LARGE SCALE MRNA]</scope>
    <source>
        <tissue>Placenta</tissue>
    </source>
</reference>
<reference key="3">
    <citation type="journal article" date="2006" name="Nature">
        <title>DNA sequence and analysis of human chromosome 8.</title>
        <authorList>
            <person name="Nusbaum C."/>
            <person name="Mikkelsen T.S."/>
            <person name="Zody M.C."/>
            <person name="Asakawa S."/>
            <person name="Taudien S."/>
            <person name="Garber M."/>
            <person name="Kodira C.D."/>
            <person name="Schueler M.G."/>
            <person name="Shimizu A."/>
            <person name="Whittaker C.A."/>
            <person name="Chang J.L."/>
            <person name="Cuomo C.A."/>
            <person name="Dewar K."/>
            <person name="FitzGerald M.G."/>
            <person name="Yang X."/>
            <person name="Allen N.R."/>
            <person name="Anderson S."/>
            <person name="Asakawa T."/>
            <person name="Blechschmidt K."/>
            <person name="Bloom T."/>
            <person name="Borowsky M.L."/>
            <person name="Butler J."/>
            <person name="Cook A."/>
            <person name="Corum B."/>
            <person name="DeArellano K."/>
            <person name="DeCaprio D."/>
            <person name="Dooley K.T."/>
            <person name="Dorris L. III"/>
            <person name="Engels R."/>
            <person name="Gloeckner G."/>
            <person name="Hafez N."/>
            <person name="Hagopian D.S."/>
            <person name="Hall J.L."/>
            <person name="Ishikawa S.K."/>
            <person name="Jaffe D.B."/>
            <person name="Kamat A."/>
            <person name="Kudoh J."/>
            <person name="Lehmann R."/>
            <person name="Lokitsang T."/>
            <person name="Macdonald P."/>
            <person name="Major J.E."/>
            <person name="Matthews C.D."/>
            <person name="Mauceli E."/>
            <person name="Menzel U."/>
            <person name="Mihalev A.H."/>
            <person name="Minoshima S."/>
            <person name="Murayama Y."/>
            <person name="Naylor J.W."/>
            <person name="Nicol R."/>
            <person name="Nguyen C."/>
            <person name="O'Leary S.B."/>
            <person name="O'Neill K."/>
            <person name="Parker S.C.J."/>
            <person name="Polley A."/>
            <person name="Raymond C.K."/>
            <person name="Reichwald K."/>
            <person name="Rodriguez J."/>
            <person name="Sasaki T."/>
            <person name="Schilhabel M."/>
            <person name="Siddiqui R."/>
            <person name="Smith C.L."/>
            <person name="Sneddon T.P."/>
            <person name="Talamas J.A."/>
            <person name="Tenzin P."/>
            <person name="Topham K."/>
            <person name="Venkataraman V."/>
            <person name="Wen G."/>
            <person name="Yamazaki S."/>
            <person name="Young S.K."/>
            <person name="Zeng Q."/>
            <person name="Zimmer A.R."/>
            <person name="Rosenthal A."/>
            <person name="Birren B.W."/>
            <person name="Platzer M."/>
            <person name="Shimizu N."/>
            <person name="Lander E.S."/>
        </authorList>
    </citation>
    <scope>NUCLEOTIDE SEQUENCE [LARGE SCALE GENOMIC DNA]</scope>
</reference>
<reference key="4">
    <citation type="submission" date="2005-07" db="EMBL/GenBank/DDBJ databases">
        <authorList>
            <person name="Mural R.J."/>
            <person name="Istrail S."/>
            <person name="Sutton G.G."/>
            <person name="Florea L."/>
            <person name="Halpern A.L."/>
            <person name="Mobarry C.M."/>
            <person name="Lippert R."/>
            <person name="Walenz B."/>
            <person name="Shatkay H."/>
            <person name="Dew I."/>
            <person name="Miller J.R."/>
            <person name="Flanigan M.J."/>
            <person name="Edwards N.J."/>
            <person name="Bolanos R."/>
            <person name="Fasulo D."/>
            <person name="Halldorsson B.V."/>
            <person name="Hannenhalli S."/>
            <person name="Turner R."/>
            <person name="Yooseph S."/>
            <person name="Lu F."/>
            <person name="Nusskern D.R."/>
            <person name="Shue B.C."/>
            <person name="Zheng X.H."/>
            <person name="Zhong F."/>
            <person name="Delcher A.L."/>
            <person name="Huson D.H."/>
            <person name="Kravitz S.A."/>
            <person name="Mouchard L."/>
            <person name="Reinert K."/>
            <person name="Remington K.A."/>
            <person name="Clark A.G."/>
            <person name="Waterman M.S."/>
            <person name="Eichler E.E."/>
            <person name="Adams M.D."/>
            <person name="Hunkapiller M.W."/>
            <person name="Myers E.W."/>
            <person name="Venter J.C."/>
        </authorList>
    </citation>
    <scope>NUCLEOTIDE SEQUENCE [LARGE SCALE GENOMIC DNA]</scope>
</reference>
<reference key="5">
    <citation type="journal article" date="2004" name="Genome Res.">
        <title>The status, quality, and expansion of the NIH full-length cDNA project: the Mammalian Gene Collection (MGC).</title>
        <authorList>
            <consortium name="The MGC Project Team"/>
        </authorList>
    </citation>
    <scope>NUCLEOTIDE SEQUENCE [LARGE SCALE MRNA]</scope>
    <source>
        <tissue>Testis</tissue>
    </source>
</reference>
<reference key="6">
    <citation type="journal article" date="2004" name="J. Biol. Chem.">
        <title>A mutation inactivating the mitochondrial inner membrane folate transporter creates a glycine requirement for survival of chinese hamster cells.</title>
        <authorList>
            <person name="McCarthy E.A."/>
            <person name="Titus S.A."/>
            <person name="Taylor S.M."/>
            <person name="Jackson-Cook C."/>
            <person name="Moran R.G."/>
        </authorList>
    </citation>
    <scope>CAUTION</scope>
</reference>
<reference key="7">
    <citation type="journal article" date="2005" name="Mol. Genet. Metab.">
        <title>Identification of the human mitochondrial FAD transporter and its potential role in multiple acyl-CoA dehydrogenase deficiency.</title>
        <authorList>
            <person name="Spaan A.N."/>
            <person name="Ijlst L."/>
            <person name="van Roermund C.W."/>
            <person name="Wijburg F.A."/>
            <person name="Wanders R.J."/>
            <person name="Waterham H.R."/>
        </authorList>
    </citation>
    <scope>FUNCTION</scope>
    <scope>TRANSPORTER ACTIVITY</scope>
</reference>
<reference key="8">
    <citation type="journal article" date="2015" name="Proteomics">
        <title>N-terminome analysis of the human mitochondrial proteome.</title>
        <authorList>
            <person name="Vaca Jacome A.S."/>
            <person name="Rabilloud T."/>
            <person name="Schaeffer-Reiss C."/>
            <person name="Rompais M."/>
            <person name="Ayoub D."/>
            <person name="Lane L."/>
            <person name="Bairoch A."/>
            <person name="Van Dorsselaer A."/>
            <person name="Carapito C."/>
        </authorList>
    </citation>
    <scope>IDENTIFICATION BY MASS SPECTROMETRY [LARGE SCALE ANALYSIS]</scope>
</reference>
<reference key="9">
    <citation type="journal article" date="2016" name="N. Engl. J. Med.">
        <title>SLC25A32 Mutations and Riboflavin-Responsive Exercise Intolerance.</title>
        <authorList>
            <person name="Schiff M."/>
            <person name="Veauville-Merllie A."/>
            <person name="Su C.H."/>
            <person name="Tzagoloff A."/>
            <person name="Rak M."/>
            <person name="Ogier de Baulny H."/>
            <person name="Boutron A."/>
            <person name="Smedts-Walters H."/>
            <person name="Romero N.B."/>
            <person name="Rigal O."/>
            <person name="Rustin P."/>
            <person name="Vianey-Saban C."/>
            <person name="Acquaviva-Bourdain C."/>
        </authorList>
    </citation>
    <scope>INVOLVEMENT IN RREI</scope>
    <scope>VARIANT RREI HIS-147</scope>
    <scope>CHARACTERIZATION OF VARIANT RREI HIS-147</scope>
</reference>
<reference key="10">
    <citation type="journal article" date="2018" name="Proc. Natl. Acad. Sci. U.S.A.">
        <title>Formate rescues neural tube defects caused by mutations in Slc25a32.</title>
        <authorList>
            <person name="Kim J."/>
            <person name="Lei Y."/>
            <person name="Guo J."/>
            <person name="Kim S.E."/>
            <person name="Wlodarczyk B.J."/>
            <person name="Cabrera R.M."/>
            <person name="Lin Y.L."/>
            <person name="Nilsson T.K."/>
            <person name="Zhang T."/>
            <person name="Ren A."/>
            <person name="Wang L."/>
            <person name="Yuan Z."/>
            <person name="Zheng Y.F."/>
            <person name="Wang H.Y."/>
            <person name="Finnell R.H."/>
        </authorList>
    </citation>
    <scope>VARIANTS NTD VAL-55; ALA-71; THR-128; 131-GLY--LYS-315 DEL AND ASN-260</scope>
    <scope>CHARACTERIZATION OF VARIANT NTD 131-GLY--LYS-315 DEL</scope>
    <scope>FUNCTION</scope>
    <scope>SUBCELLULAR LOCATION</scope>
</reference>
<reference key="11">
    <citation type="journal article" date="2022" name="Cell. Mol. Life Sci.">
        <title>Mitochondrial FAD shortage in SLC25A32 deficiency affects folate-mediated one-carbon metabolism.</title>
        <authorList>
            <person name="Peng M.Z."/>
            <person name="Shao Y.X."/>
            <person name="Li X.Z."/>
            <person name="Zhang K.D."/>
            <person name="Cai Y.N."/>
            <person name="Lin Y.T."/>
            <person name="Jiang M.Y."/>
            <person name="Liu Z.C."/>
            <person name="Su X.Y."/>
            <person name="Zhang W."/>
            <person name="Jiang X.L."/>
            <person name="Liu L."/>
        </authorList>
    </citation>
    <scope>INVOLVEMENT IN RREI</scope>
    <scope>VARIANTS RREI CYS-174 AND ARG-235</scope>
    <scope>CHARACTERIZATION OF VARIANTS RREI CYS-174 AND ARG-235</scope>
    <scope>FUNCTION</scope>
    <scope>TRANSPORTER ACTIVITY</scope>
    <scope>CAUTION</scope>
</reference>
<gene>
    <name evidence="9 13" type="primary">SLC25A32</name>
    <name type="synonym">MFT</name>
    <name type="synonym">MFTC</name>
</gene>
<proteinExistence type="evidence at protein level"/>
<dbReference type="EMBL" id="AF283645">
    <property type="protein sequence ID" value="AAG37834.1"/>
    <property type="molecule type" value="mRNA"/>
</dbReference>
<dbReference type="EMBL" id="AK027531">
    <property type="protein sequence ID" value="BAB55180.1"/>
    <property type="molecule type" value="mRNA"/>
</dbReference>
<dbReference type="EMBL" id="AK027787">
    <property type="protein sequence ID" value="BAB55368.1"/>
    <property type="molecule type" value="mRNA"/>
</dbReference>
<dbReference type="EMBL" id="AC012213">
    <property type="status" value="NOT_ANNOTATED_CDS"/>
    <property type="molecule type" value="Genomic_DNA"/>
</dbReference>
<dbReference type="EMBL" id="CH471060">
    <property type="protein sequence ID" value="EAW91877.1"/>
    <property type="molecule type" value="Genomic_DNA"/>
</dbReference>
<dbReference type="EMBL" id="CH471060">
    <property type="protein sequence ID" value="EAW91878.1"/>
    <property type="molecule type" value="Genomic_DNA"/>
</dbReference>
<dbReference type="EMBL" id="BC021893">
    <property type="protein sequence ID" value="AAH21893.1"/>
    <property type="molecule type" value="mRNA"/>
</dbReference>
<dbReference type="CCDS" id="CCDS6300.1"/>
<dbReference type="RefSeq" id="NP_110407.2">
    <property type="nucleotide sequence ID" value="NM_030780.4"/>
</dbReference>
<dbReference type="SMR" id="Q9H2D1"/>
<dbReference type="BioGRID" id="123352">
    <property type="interactions" value="36"/>
</dbReference>
<dbReference type="FunCoup" id="Q9H2D1">
    <property type="interactions" value="2714"/>
</dbReference>
<dbReference type="IntAct" id="Q9H2D1">
    <property type="interactions" value="24"/>
</dbReference>
<dbReference type="STRING" id="9606.ENSP00000297578"/>
<dbReference type="DrugBank" id="DB00158">
    <property type="generic name" value="Folic acid"/>
</dbReference>
<dbReference type="TCDB" id="2.A.29.10.2">
    <property type="family name" value="the mitochondrial carrier (mc) family"/>
</dbReference>
<dbReference type="GlyGen" id="Q9H2D1">
    <property type="glycosylation" value="1 site"/>
</dbReference>
<dbReference type="iPTMnet" id="Q9H2D1"/>
<dbReference type="PhosphoSitePlus" id="Q9H2D1"/>
<dbReference type="SwissPalm" id="Q9H2D1"/>
<dbReference type="BioMuta" id="SLC25A32"/>
<dbReference type="DMDM" id="34223740"/>
<dbReference type="jPOST" id="Q9H2D1"/>
<dbReference type="MassIVE" id="Q9H2D1"/>
<dbReference type="PaxDb" id="9606-ENSP00000297578"/>
<dbReference type="PeptideAtlas" id="Q9H2D1"/>
<dbReference type="ProteomicsDB" id="80530"/>
<dbReference type="Pumba" id="Q9H2D1"/>
<dbReference type="Antibodypedia" id="13342">
    <property type="antibodies" value="69 antibodies from 15 providers"/>
</dbReference>
<dbReference type="DNASU" id="81034"/>
<dbReference type="Ensembl" id="ENST00000297578.9">
    <property type="protein sequence ID" value="ENSP00000297578.4"/>
    <property type="gene ID" value="ENSG00000164933.13"/>
</dbReference>
<dbReference type="GeneID" id="81034"/>
<dbReference type="KEGG" id="hsa:81034"/>
<dbReference type="MANE-Select" id="ENST00000297578.9">
    <property type="protein sequence ID" value="ENSP00000297578.4"/>
    <property type="RefSeq nucleotide sequence ID" value="NM_030780.5"/>
    <property type="RefSeq protein sequence ID" value="NP_110407.2"/>
</dbReference>
<dbReference type="UCSC" id="uc003yll.5">
    <property type="organism name" value="human"/>
</dbReference>
<dbReference type="AGR" id="HGNC:29683"/>
<dbReference type="CTD" id="81034"/>
<dbReference type="DisGeNET" id="81034"/>
<dbReference type="GeneCards" id="SLC25A32"/>
<dbReference type="HGNC" id="HGNC:29683">
    <property type="gene designation" value="SLC25A32"/>
</dbReference>
<dbReference type="HPA" id="ENSG00000164933">
    <property type="expression patterns" value="Low tissue specificity"/>
</dbReference>
<dbReference type="MalaCards" id="SLC25A32"/>
<dbReference type="MIM" id="138480">
    <property type="type" value="gene"/>
</dbReference>
<dbReference type="MIM" id="182940">
    <property type="type" value="phenotype"/>
</dbReference>
<dbReference type="MIM" id="616839">
    <property type="type" value="phenotype"/>
</dbReference>
<dbReference type="neXtProt" id="NX_Q9H2D1"/>
<dbReference type="OpenTargets" id="ENSG00000164933"/>
<dbReference type="Orphanet" id="394532">
    <property type="disease" value="Multiple acyl-CoA dehydrogenase deficiency, mild type"/>
</dbReference>
<dbReference type="PharmGKB" id="PA142670905"/>
<dbReference type="VEuPathDB" id="HostDB:ENSG00000164933"/>
<dbReference type="eggNOG" id="KOG0764">
    <property type="taxonomic scope" value="Eukaryota"/>
</dbReference>
<dbReference type="GeneTree" id="ENSGT00920000149145"/>
<dbReference type="HOGENOM" id="CLU_015166_6_4_1"/>
<dbReference type="InParanoid" id="Q9H2D1"/>
<dbReference type="OMA" id="TTVWKHE"/>
<dbReference type="OrthoDB" id="428293at2759"/>
<dbReference type="PAN-GO" id="Q9H2D1">
    <property type="GO annotations" value="4 GO annotations based on evolutionary models"/>
</dbReference>
<dbReference type="PhylomeDB" id="Q9H2D1"/>
<dbReference type="TreeFam" id="TF314217"/>
<dbReference type="PathwayCommons" id="Q9H2D1"/>
<dbReference type="Reactome" id="R-HSA-196757">
    <property type="pathway name" value="Metabolism of folate and pterines"/>
</dbReference>
<dbReference type="SignaLink" id="Q9H2D1"/>
<dbReference type="BioGRID-ORCS" id="81034">
    <property type="hits" value="16 hits in 1155 CRISPR screens"/>
</dbReference>
<dbReference type="ChiTaRS" id="SLC25A32">
    <property type="organism name" value="human"/>
</dbReference>
<dbReference type="GenomeRNAi" id="81034"/>
<dbReference type="Pharos" id="Q9H2D1">
    <property type="development level" value="Tbio"/>
</dbReference>
<dbReference type="PRO" id="PR:Q9H2D1"/>
<dbReference type="Proteomes" id="UP000005640">
    <property type="component" value="Chromosome 8"/>
</dbReference>
<dbReference type="RNAct" id="Q9H2D1">
    <property type="molecule type" value="protein"/>
</dbReference>
<dbReference type="Bgee" id="ENSG00000164933">
    <property type="expression patterns" value="Expressed in calcaneal tendon and 104 other cell types or tissues"/>
</dbReference>
<dbReference type="ExpressionAtlas" id="Q9H2D1">
    <property type="expression patterns" value="baseline and differential"/>
</dbReference>
<dbReference type="GO" id="GO:0005743">
    <property type="term" value="C:mitochondrial inner membrane"/>
    <property type="evidence" value="ECO:0000316"/>
    <property type="project" value="BHF-UCL"/>
</dbReference>
<dbReference type="GO" id="GO:0005739">
    <property type="term" value="C:mitochondrion"/>
    <property type="evidence" value="ECO:0000314"/>
    <property type="project" value="UniProtKB"/>
</dbReference>
<dbReference type="GO" id="GO:0015230">
    <property type="term" value="F:FAD transmembrane transporter activity"/>
    <property type="evidence" value="ECO:0000315"/>
    <property type="project" value="UniProtKB"/>
</dbReference>
<dbReference type="GO" id="GO:0008517">
    <property type="term" value="F:folic acid transmembrane transporter activity"/>
    <property type="evidence" value="ECO:0000318"/>
    <property type="project" value="GO_Central"/>
</dbReference>
<dbReference type="GO" id="GO:0046655">
    <property type="term" value="P:folic acid metabolic process"/>
    <property type="evidence" value="ECO:0000304"/>
    <property type="project" value="Reactome"/>
</dbReference>
<dbReference type="GO" id="GO:1990548">
    <property type="term" value="P:mitochondrial FAD transmembrane transport"/>
    <property type="evidence" value="ECO:0000315"/>
    <property type="project" value="UniProtKB"/>
</dbReference>
<dbReference type="GO" id="GO:0055085">
    <property type="term" value="P:transmembrane transport"/>
    <property type="evidence" value="ECO:0000318"/>
    <property type="project" value="GO_Central"/>
</dbReference>
<dbReference type="FunFam" id="1.50.40.10:FF:000025">
    <property type="entry name" value="mitochondrial folate transporter/carrier"/>
    <property type="match status" value="1"/>
</dbReference>
<dbReference type="Gene3D" id="1.50.40.10">
    <property type="entry name" value="Mitochondrial carrier domain"/>
    <property type="match status" value="1"/>
</dbReference>
<dbReference type="InterPro" id="IPR002067">
    <property type="entry name" value="Mit_carrier"/>
</dbReference>
<dbReference type="InterPro" id="IPR018108">
    <property type="entry name" value="Mitochondrial_sb/sol_carrier"/>
</dbReference>
<dbReference type="InterPro" id="IPR023395">
    <property type="entry name" value="Mt_carrier_dom_sf"/>
</dbReference>
<dbReference type="InterPro" id="IPR044712">
    <property type="entry name" value="SLC25A32-like"/>
</dbReference>
<dbReference type="PANTHER" id="PTHR45683">
    <property type="entry name" value="MITOCHONDRIAL NICOTINAMIDE ADENINE DINUCLEOTIDE TRANSPORTER 1-RELATED-RELATED"/>
    <property type="match status" value="1"/>
</dbReference>
<dbReference type="Pfam" id="PF00153">
    <property type="entry name" value="Mito_carr"/>
    <property type="match status" value="3"/>
</dbReference>
<dbReference type="PRINTS" id="PR00784">
    <property type="entry name" value="MTUNCOUPLING"/>
</dbReference>
<dbReference type="SUPFAM" id="SSF103506">
    <property type="entry name" value="Mitochondrial carrier"/>
    <property type="match status" value="1"/>
</dbReference>
<dbReference type="PROSITE" id="PS50920">
    <property type="entry name" value="SOLCAR"/>
    <property type="match status" value="3"/>
</dbReference>
<feature type="chain" id="PRO_0000090641" description="Solute carrier family 25 member 32">
    <location>
        <begin position="1"/>
        <end position="315"/>
    </location>
</feature>
<feature type="transmembrane region" description="Helical; Name=1" evidence="1">
    <location>
        <begin position="26"/>
        <end position="43"/>
    </location>
</feature>
<feature type="transmembrane region" description="Helical; Name=2" evidence="1">
    <location>
        <begin position="89"/>
        <end position="106"/>
    </location>
</feature>
<feature type="transmembrane region" description="Helical; Name=3" evidence="1">
    <location>
        <begin position="123"/>
        <end position="143"/>
    </location>
</feature>
<feature type="transmembrane region" description="Helical; Name=4" evidence="1">
    <location>
        <begin position="186"/>
        <end position="203"/>
    </location>
</feature>
<feature type="transmembrane region" description="Helical; Name=5" evidence="1">
    <location>
        <begin position="227"/>
        <end position="243"/>
    </location>
</feature>
<feature type="transmembrane region" description="Helical; Name=6" evidence="1">
    <location>
        <begin position="281"/>
        <end position="300"/>
    </location>
</feature>
<feature type="repeat" description="Solcar 1" evidence="2">
    <location>
        <begin position="20"/>
        <end position="109"/>
    </location>
</feature>
<feature type="repeat" description="Solcar 2" evidence="2">
    <location>
        <begin position="118"/>
        <end position="209"/>
    </location>
</feature>
<feature type="repeat" description="Solcar 3" evidence="2">
    <location>
        <begin position="222"/>
        <end position="306"/>
    </location>
</feature>
<feature type="sequence variant" id="VAR_082961" description="In NTD; uncertain significance; dbSNP:rs1332049392." evidence="7">
    <original>G</original>
    <variation>V</variation>
    <location>
        <position position="55"/>
    </location>
</feature>
<feature type="sequence variant" id="VAR_082962" description="In NTD; uncertain significance; dbSNP:rs564720045." evidence="7">
    <original>T</original>
    <variation>A</variation>
    <location>
        <position position="71"/>
    </location>
</feature>
<feature type="sequence variant" id="VAR_050130" description="In dbSNP:rs17803441." evidence="3">
    <original>R</original>
    <variation>H</variation>
    <location>
        <position position="117"/>
    </location>
</feature>
<feature type="sequence variant" id="VAR_082963" description="In NTD; uncertain significance; dbSNP:rs1816293268." evidence="7">
    <original>A</original>
    <variation>T</variation>
    <location>
        <position position="128"/>
    </location>
</feature>
<feature type="sequence variant" id="VAR_082964" description="In NTD; uncertain significance; loss of function; no effect on mitochondrial localization." evidence="7">
    <location>
        <begin position="131"/>
        <end position="315"/>
    </location>
</feature>
<feature type="sequence variant" id="VAR_076364" description="In RREI; decreases succinate dehydrogenase activity and glycerol-3-phosphate dehydrogenase activity; dbSNP:rs142329098." evidence="6">
    <original>R</original>
    <variation>H</variation>
    <location>
        <position position="147"/>
    </location>
</feature>
<feature type="sequence variant" id="VAR_088373" description="In RREI; results in reduced transcript and protein levels while retaining normal FAD transporter activity, when expressed in murine skeletal muscle cells; dbSNP:rs1563717284." evidence="8">
    <original>Y</original>
    <variation>C</variation>
    <location>
        <position position="174"/>
    </location>
</feature>
<feature type="sequence variant" id="VAR_088374" description="In RREI; results in impaired FAD transporter activity and lower FAD, FMN and riboflavin mitochondrial levels, when expressed in murine skeletal muscle cells; motor function impairment shown by a mouse knockin model of the mutation; dbSNP:rs1816220699." evidence="8">
    <original>K</original>
    <variation>R</variation>
    <location>
        <position position="235"/>
    </location>
</feature>
<feature type="sequence variant" id="VAR_082965" description="In NTD; uncertain significance; dbSNP:rs2130436041." evidence="7">
    <original>S</original>
    <variation>N</variation>
    <location>
        <position position="260"/>
    </location>
</feature>
<feature type="sequence conflict" description="In Ref. 2; BAB55368." evidence="10" ref="2">
    <original>F</original>
    <variation>L</variation>
    <location>
        <position position="306"/>
    </location>
</feature>
<name>S2532_HUMAN</name>
<keyword id="KW-0225">Disease variant</keyword>
<keyword id="KW-0472">Membrane</keyword>
<keyword id="KW-0496">Mitochondrion</keyword>
<keyword id="KW-0999">Mitochondrion inner membrane</keyword>
<keyword id="KW-1267">Proteomics identification</keyword>
<keyword id="KW-1185">Reference proteome</keyword>
<keyword id="KW-0677">Repeat</keyword>
<keyword id="KW-0812">Transmembrane</keyword>
<keyword id="KW-1133">Transmembrane helix</keyword>
<keyword id="KW-0813">Transport</keyword>
<accession>Q9H2D1</accession>
<accession>A0A024R9D0</accession>
<accession>Q96JZ6</accession>
<accession>Q96SU7</accession>
<evidence type="ECO:0000255" key="1"/>
<evidence type="ECO:0000255" key="2">
    <source>
        <dbReference type="PROSITE-ProRule" id="PRU00282"/>
    </source>
</evidence>
<evidence type="ECO:0000269" key="3">
    <source>
    </source>
</evidence>
<evidence type="ECO:0000269" key="4">
    <source>
    </source>
</evidence>
<evidence type="ECO:0000269" key="5">
    <source>
    </source>
</evidence>
<evidence type="ECO:0000269" key="6">
    <source>
    </source>
</evidence>
<evidence type="ECO:0000269" key="7">
    <source>
    </source>
</evidence>
<evidence type="ECO:0000269" key="8">
    <source>
    </source>
</evidence>
<evidence type="ECO:0000303" key="9">
    <source>
    </source>
</evidence>
<evidence type="ECO:0000305" key="10"/>
<evidence type="ECO:0000305" key="11">
    <source>
    </source>
</evidence>
<evidence type="ECO:0000305" key="12">
    <source>
    </source>
</evidence>
<evidence type="ECO:0000312" key="13">
    <source>
        <dbReference type="HGNC" id="HGNC:29683"/>
    </source>
</evidence>
<comment type="function">
    <text evidence="5 7 8">Facilitates flavin adenine dinucleotide (FAD) translocation across the mitochondrial inner membrane into the mitochondrial matrix where it acts as a redox cofactor to assist flavoenzyme activities in fundamental metabolic processes including fatty acid beta-oxidation, amino acid and choline metabolism as well as mitochondrial electron transportation. In particular, provides FAD to DLD dehydrogenase of the glycine cleavage system, part of mitochondrial one-carbon metabolic pathway involved in neural tube closure in early embryogenesis.</text>
</comment>
<comment type="catalytic activity">
    <reaction evidence="5 8">
        <text>FAD(in) = FAD(out)</text>
        <dbReference type="Rhea" id="RHEA:76535"/>
        <dbReference type="ChEBI" id="CHEBI:57692"/>
    </reaction>
</comment>
<comment type="subcellular location">
    <subcellularLocation>
        <location evidence="11">Mitochondrion inner membrane</location>
        <topology evidence="1">Multi-pass membrane protein</topology>
    </subcellularLocation>
</comment>
<comment type="tissue specificity">
    <text>Ubiquitous.</text>
</comment>
<comment type="disease" evidence="6 8">
    <disease id="DI-04667">
        <name>Exercise intolerance, riboflavin-responsive</name>
        <acronym>RREI</acronym>
        <description>A riboflavin-responsive form of exercise intolerance, a condition characterized by failure to maintain an expected level of force during sustained or repeated muscle contraction, resulting in an overwhelming sense of tiredness, lack of energy and feeling of exhaustion. RREI transmission pattern is consistent with autosomal recessive inheritance.</description>
        <dbReference type="MIM" id="616839"/>
    </disease>
    <text>The disease is caused by variants affecting the gene represented in this entry.</text>
</comment>
<comment type="disease" evidence="7">
    <disease id="DI-02042">
        <name>Neural tube defects</name>
        <acronym>NTD</acronym>
        <description>Congenital malformations of the central nervous system and adjacent structures related to defective neural tube closure during the first trimester of pregnancy. Failure of neural tube closure can occur at any level of the embryonic axis. Common NTD forms include anencephaly, myelomeningocele and spina bifida, which result from the failure of fusion in the cranial and spinal region of the neural tube. NTDs have a multifactorial etiology encompassing both genetic and environmental components.</description>
        <dbReference type="MIM" id="182940"/>
    </disease>
    <text>Disease susceptibility is associated with variants affecting the gene represented in this entry.</text>
</comment>
<comment type="similarity">
    <text evidence="10">Belongs to the mitochondrial carrier (TC 2.A.29) family.</text>
</comment>
<comment type="caution">
    <text evidence="4 8">Initially postulated to transport folate based on complementation evidence, but it was latter shown to rather function as a FAD transporter indirectly affecting folate levels and folate-mediated one-carbon metabolism in mitochondria.</text>
</comment>